<protein>
    <recommendedName>
        <fullName evidence="1">Exodeoxyribonuclease 7 small subunit</fullName>
        <ecNumber evidence="1">3.1.11.6</ecNumber>
    </recommendedName>
    <alternativeName>
        <fullName evidence="1">Exodeoxyribonuclease VII small subunit</fullName>
        <shortName evidence="1">Exonuclease VII small subunit</shortName>
    </alternativeName>
</protein>
<feature type="chain" id="PRO_0000206986" description="Exodeoxyribonuclease 7 small subunit">
    <location>
        <begin position="1"/>
        <end position="80"/>
    </location>
</feature>
<dbReference type="EC" id="3.1.11.6" evidence="1"/>
<dbReference type="EMBL" id="CR378665">
    <property type="protein sequence ID" value="CAG19220.1"/>
    <property type="molecule type" value="Genomic_DNA"/>
</dbReference>
<dbReference type="RefSeq" id="WP_006230849.1">
    <property type="nucleotide sequence ID" value="NC_006370.1"/>
</dbReference>
<dbReference type="SMR" id="Q6LU05"/>
<dbReference type="STRING" id="298386.PBPRA0807"/>
<dbReference type="KEGG" id="ppr:PBPRA0807"/>
<dbReference type="eggNOG" id="COG1722">
    <property type="taxonomic scope" value="Bacteria"/>
</dbReference>
<dbReference type="HOGENOM" id="CLU_145918_3_3_6"/>
<dbReference type="Proteomes" id="UP000000593">
    <property type="component" value="Chromosome 1"/>
</dbReference>
<dbReference type="GO" id="GO:0005829">
    <property type="term" value="C:cytosol"/>
    <property type="evidence" value="ECO:0007669"/>
    <property type="project" value="TreeGrafter"/>
</dbReference>
<dbReference type="GO" id="GO:0009318">
    <property type="term" value="C:exodeoxyribonuclease VII complex"/>
    <property type="evidence" value="ECO:0007669"/>
    <property type="project" value="InterPro"/>
</dbReference>
<dbReference type="GO" id="GO:0008855">
    <property type="term" value="F:exodeoxyribonuclease VII activity"/>
    <property type="evidence" value="ECO:0007669"/>
    <property type="project" value="UniProtKB-UniRule"/>
</dbReference>
<dbReference type="GO" id="GO:0006308">
    <property type="term" value="P:DNA catabolic process"/>
    <property type="evidence" value="ECO:0007669"/>
    <property type="project" value="UniProtKB-UniRule"/>
</dbReference>
<dbReference type="Gene3D" id="1.10.287.1040">
    <property type="entry name" value="Exonuclease VII, small subunit"/>
    <property type="match status" value="1"/>
</dbReference>
<dbReference type="HAMAP" id="MF_00337">
    <property type="entry name" value="Exonuc_7_S"/>
    <property type="match status" value="1"/>
</dbReference>
<dbReference type="InterPro" id="IPR003761">
    <property type="entry name" value="Exonuc_VII_S"/>
</dbReference>
<dbReference type="InterPro" id="IPR037004">
    <property type="entry name" value="Exonuc_VII_ssu_sf"/>
</dbReference>
<dbReference type="NCBIfam" id="NF002137">
    <property type="entry name" value="PRK00977.1-1"/>
    <property type="match status" value="1"/>
</dbReference>
<dbReference type="NCBIfam" id="NF002140">
    <property type="entry name" value="PRK00977.1-4"/>
    <property type="match status" value="1"/>
</dbReference>
<dbReference type="NCBIfam" id="TIGR01280">
    <property type="entry name" value="xseB"/>
    <property type="match status" value="1"/>
</dbReference>
<dbReference type="PANTHER" id="PTHR34137">
    <property type="entry name" value="EXODEOXYRIBONUCLEASE 7 SMALL SUBUNIT"/>
    <property type="match status" value="1"/>
</dbReference>
<dbReference type="PANTHER" id="PTHR34137:SF1">
    <property type="entry name" value="EXODEOXYRIBONUCLEASE 7 SMALL SUBUNIT"/>
    <property type="match status" value="1"/>
</dbReference>
<dbReference type="Pfam" id="PF02609">
    <property type="entry name" value="Exonuc_VII_S"/>
    <property type="match status" value="1"/>
</dbReference>
<dbReference type="PIRSF" id="PIRSF006488">
    <property type="entry name" value="Exonuc_VII_S"/>
    <property type="match status" value="1"/>
</dbReference>
<dbReference type="SUPFAM" id="SSF116842">
    <property type="entry name" value="XseB-like"/>
    <property type="match status" value="1"/>
</dbReference>
<proteinExistence type="inferred from homology"/>
<name>EX7S_PHOPR</name>
<accession>Q6LU05</accession>
<sequence>MAAKKPENMAFEAALDELDSIVNELESGDIALEDALKKFERGIMLARTSQKKLTQAEQRVEILLQADDEAPLTEFNENNE</sequence>
<organism>
    <name type="scientific">Photobacterium profundum (strain SS9)</name>
    <dbReference type="NCBI Taxonomy" id="298386"/>
    <lineage>
        <taxon>Bacteria</taxon>
        <taxon>Pseudomonadati</taxon>
        <taxon>Pseudomonadota</taxon>
        <taxon>Gammaproteobacteria</taxon>
        <taxon>Vibrionales</taxon>
        <taxon>Vibrionaceae</taxon>
        <taxon>Photobacterium</taxon>
    </lineage>
</organism>
<evidence type="ECO:0000255" key="1">
    <source>
        <dbReference type="HAMAP-Rule" id="MF_00337"/>
    </source>
</evidence>
<reference key="1">
    <citation type="journal article" date="2005" name="Science">
        <title>Life at depth: Photobacterium profundum genome sequence and expression analysis.</title>
        <authorList>
            <person name="Vezzi A."/>
            <person name="Campanaro S."/>
            <person name="D'Angelo M."/>
            <person name="Simonato F."/>
            <person name="Vitulo N."/>
            <person name="Lauro F.M."/>
            <person name="Cestaro A."/>
            <person name="Malacrida G."/>
            <person name="Simionati B."/>
            <person name="Cannata N."/>
            <person name="Romualdi C."/>
            <person name="Bartlett D.H."/>
            <person name="Valle G."/>
        </authorList>
    </citation>
    <scope>NUCLEOTIDE SEQUENCE [LARGE SCALE GENOMIC DNA]</scope>
    <source>
        <strain>ATCC BAA-1253 / SS9</strain>
    </source>
</reference>
<gene>
    <name evidence="1" type="primary">xseB</name>
    <name type="ordered locus">PBPRA0807</name>
</gene>
<comment type="function">
    <text evidence="1">Bidirectionally degrades single-stranded DNA into large acid-insoluble oligonucleotides, which are then degraded further into small acid-soluble oligonucleotides.</text>
</comment>
<comment type="catalytic activity">
    <reaction evidence="1">
        <text>Exonucleolytic cleavage in either 5'- to 3'- or 3'- to 5'-direction to yield nucleoside 5'-phosphates.</text>
        <dbReference type="EC" id="3.1.11.6"/>
    </reaction>
</comment>
<comment type="subunit">
    <text evidence="1">Heterooligomer composed of large and small subunits.</text>
</comment>
<comment type="subcellular location">
    <subcellularLocation>
        <location evidence="1">Cytoplasm</location>
    </subcellularLocation>
</comment>
<comment type="similarity">
    <text evidence="1">Belongs to the XseB family.</text>
</comment>
<keyword id="KW-0963">Cytoplasm</keyword>
<keyword id="KW-0269">Exonuclease</keyword>
<keyword id="KW-0378">Hydrolase</keyword>
<keyword id="KW-0540">Nuclease</keyword>
<keyword id="KW-1185">Reference proteome</keyword>